<gene>
    <name type="primary">Ubc</name>
</gene>
<reference key="1">
    <citation type="journal article" date="2002" name="J. Mol. Evol.">
        <title>Evolution of the mouse polyubiquitin-C gene.</title>
        <authorList>
            <person name="Perelygin A.A."/>
            <person name="Kondrashov F.A."/>
            <person name="Rogozin I.B."/>
            <person name="Brinton M.A."/>
        </authorList>
    </citation>
    <scope>NUCLEOTIDE SEQUENCE [GENOMIC DNA]</scope>
</reference>
<reference key="2">
    <citation type="journal article" date="2009" name="PLoS Biol.">
        <title>Lineage-specific biology revealed by a finished genome assembly of the mouse.</title>
        <authorList>
            <person name="Church D.M."/>
            <person name="Goodstadt L."/>
            <person name="Hillier L.W."/>
            <person name="Zody M.C."/>
            <person name="Goldstein S."/>
            <person name="She X."/>
            <person name="Bult C.J."/>
            <person name="Agarwala R."/>
            <person name="Cherry J.L."/>
            <person name="DiCuccio M."/>
            <person name="Hlavina W."/>
            <person name="Kapustin Y."/>
            <person name="Meric P."/>
            <person name="Maglott D."/>
            <person name="Birtle Z."/>
            <person name="Marques A.C."/>
            <person name="Graves T."/>
            <person name="Zhou S."/>
            <person name="Teague B."/>
            <person name="Potamousis K."/>
            <person name="Churas C."/>
            <person name="Place M."/>
            <person name="Herschleb J."/>
            <person name="Runnheim R."/>
            <person name="Forrest D."/>
            <person name="Amos-Landgraf J."/>
            <person name="Schwartz D.C."/>
            <person name="Cheng Z."/>
            <person name="Lindblad-Toh K."/>
            <person name="Eichler E.E."/>
            <person name="Ponting C.P."/>
        </authorList>
    </citation>
    <scope>NUCLEOTIDE SEQUENCE [LARGE SCALE GENOMIC DNA]</scope>
    <source>
        <strain>C57BL/6J</strain>
    </source>
</reference>
<reference key="3">
    <citation type="journal article" date="1996" name="Cancer Res.">
        <title>Identification of genes differentially expressed in B16 murine melanoma sublines with different metastatic potentials.</title>
        <authorList>
            <person name="Ishiguro T."/>
            <person name="Nakajima M."/>
            <person name="Naito M."/>
            <person name="Muto T."/>
            <person name="Tsuruo T."/>
        </authorList>
    </citation>
    <scope>NUCLEOTIDE SEQUENCE [MRNA] OF 609-734</scope>
    <source>
        <strain>C57BL/6J</strain>
    </source>
</reference>
<reference key="4">
    <citation type="journal article" date="2009" name="Biochem. Soc. Trans.">
        <title>The emerging complexity of protein ubiquitination.</title>
        <authorList>
            <person name="Komander D."/>
        </authorList>
    </citation>
    <scope>REVIEW</scope>
    <scope>FUNCTION</scope>
</reference>
<organism>
    <name type="scientific">Mus musculus</name>
    <name type="common">Mouse</name>
    <dbReference type="NCBI Taxonomy" id="10090"/>
    <lineage>
        <taxon>Eukaryota</taxon>
        <taxon>Metazoa</taxon>
        <taxon>Chordata</taxon>
        <taxon>Craniata</taxon>
        <taxon>Vertebrata</taxon>
        <taxon>Euteleostomi</taxon>
        <taxon>Mammalia</taxon>
        <taxon>Eutheria</taxon>
        <taxon>Euarchontoglires</taxon>
        <taxon>Glires</taxon>
        <taxon>Rodentia</taxon>
        <taxon>Myomorpha</taxon>
        <taxon>Muroidea</taxon>
        <taxon>Muridae</taxon>
        <taxon>Murinae</taxon>
        <taxon>Mus</taxon>
        <taxon>Mus</taxon>
    </lineage>
</organism>
<name>UBC_MOUSE</name>
<keyword id="KW-0002">3D-structure</keyword>
<keyword id="KW-0013">ADP-ribosylation</keyword>
<keyword id="KW-0963">Cytoplasm</keyword>
<keyword id="KW-1017">Isopeptide bond</keyword>
<keyword id="KW-0472">Membrane</keyword>
<keyword id="KW-0496">Mitochondrion</keyword>
<keyword id="KW-1000">Mitochondrion outer membrane</keyword>
<keyword id="KW-0539">Nucleus</keyword>
<keyword id="KW-0597">Phosphoprotein</keyword>
<keyword id="KW-1185">Reference proteome</keyword>
<keyword id="KW-0677">Repeat</keyword>
<keyword id="KW-0832">Ubl conjugation</keyword>
<feature type="chain" id="PRO_0000396192" description="Ubiquitin">
    <location>
        <begin position="1"/>
        <end position="76"/>
    </location>
</feature>
<feature type="chain" id="PRO_0000396193" description="Ubiquitin">
    <location>
        <begin position="77"/>
        <end position="152"/>
    </location>
</feature>
<feature type="chain" id="PRO_0000396194" description="Ubiquitin">
    <location>
        <begin position="153"/>
        <end position="228"/>
    </location>
</feature>
<feature type="chain" id="PRO_0000396195" description="Ubiquitin-related 1">
    <location>
        <begin position="229"/>
        <end position="304"/>
    </location>
</feature>
<feature type="chain" id="PRO_0000396196" description="Ubiquitin">
    <location>
        <begin position="305"/>
        <end position="380"/>
    </location>
</feature>
<feature type="chain" id="PRO_0000396197" description="Ubiquitin">
    <location>
        <begin position="381"/>
        <end position="456"/>
    </location>
</feature>
<feature type="chain" id="PRO_0000396198" description="Ubiquitin">
    <location>
        <begin position="457"/>
        <end position="532"/>
    </location>
</feature>
<feature type="chain" id="PRO_0000396199" description="Ubiquitin">
    <location>
        <begin position="533"/>
        <end position="608"/>
    </location>
</feature>
<feature type="chain" id="PRO_0000396200" description="Ubiquitin">
    <location>
        <begin position="609"/>
        <end position="684"/>
    </location>
</feature>
<feature type="chain" id="PRO_0000396201" description="Ubiquitin-related 2">
    <location>
        <begin position="685"/>
        <end position="734"/>
    </location>
</feature>
<feature type="domain" description="Ubiquitin-like 1" evidence="3">
    <location>
        <begin position="1"/>
        <end position="76"/>
    </location>
</feature>
<feature type="domain" description="Ubiquitin-like 2" evidence="3">
    <location>
        <begin position="77"/>
        <end position="152"/>
    </location>
</feature>
<feature type="domain" description="Ubiquitin-like 3" evidence="3">
    <location>
        <begin position="153"/>
        <end position="228"/>
    </location>
</feature>
<feature type="domain" description="Ubiquitin-like 4" evidence="3">
    <location>
        <begin position="229"/>
        <end position="304"/>
    </location>
</feature>
<feature type="domain" description="Ubiquitin-like 5" evidence="3">
    <location>
        <begin position="305"/>
        <end position="380"/>
    </location>
</feature>
<feature type="domain" description="Ubiquitin-like 6" evidence="3">
    <location>
        <begin position="381"/>
        <end position="456"/>
    </location>
</feature>
<feature type="domain" description="Ubiquitin-like 7" evidence="3">
    <location>
        <begin position="457"/>
        <end position="532"/>
    </location>
</feature>
<feature type="domain" description="Ubiquitin-like 8" evidence="3">
    <location>
        <begin position="533"/>
        <end position="608"/>
    </location>
</feature>
<feature type="domain" description="Ubiquitin-like 9" evidence="3">
    <location>
        <begin position="609"/>
        <end position="684"/>
    </location>
</feature>
<feature type="site" description="Interacts with activating enzyme">
    <location>
        <position position="54"/>
    </location>
</feature>
<feature type="site" description="Essential for function">
    <location>
        <position position="68"/>
    </location>
</feature>
<feature type="site" description="Interacts with activating enzyme">
    <location>
        <position position="72"/>
    </location>
</feature>
<feature type="modified residue" description="Phosphoserine; by PINK1" evidence="2">
    <location>
        <position position="65"/>
    </location>
</feature>
<feature type="modified residue" description="ADP-ribosylglycine" evidence="2">
    <location>
        <position position="76"/>
    </location>
</feature>
<feature type="modified residue" description="Phosphoserine" evidence="2">
    <location>
        <position position="141"/>
    </location>
</feature>
<feature type="cross-link" description="Glycyl lysine isopeptide (Lys-Gly) (interchain with G-Cter in ubiquitin)" evidence="2">
    <location>
        <position position="6"/>
    </location>
</feature>
<feature type="cross-link" description="Glycyl lysine isopeptide (Lys-Gly) (interchain with G-Cter in ubiquitin)" evidence="2">
    <location>
        <position position="11"/>
    </location>
</feature>
<feature type="cross-link" description="Glycyl lysine isopeptide (Lys-Gly) (interchain with G-Cter in ubiquitin)" evidence="2">
    <location>
        <position position="27"/>
    </location>
</feature>
<feature type="cross-link" description="Glycyl lysine isopeptide (Lys-Gly) (interchain with G-Cter in ubiquitin)" evidence="2">
    <location>
        <position position="29"/>
    </location>
</feature>
<feature type="cross-link" description="Glycyl lysine isopeptide (Lys-Gly) (interchain with G-Cter in ubiquitin)" evidence="2">
    <location>
        <position position="33"/>
    </location>
</feature>
<feature type="cross-link" description="Glycyl lysine isopeptide (Lys-Gly) (interchain with G-Cter in ubiquitin)" evidence="2">
    <location>
        <position position="48"/>
    </location>
</feature>
<feature type="cross-link" description="Glycyl lysine isopeptide (Lys-Gly) (interchain with G-Cter in ubiquitin)" evidence="2">
    <location>
        <position position="63"/>
    </location>
</feature>
<feature type="cross-link" description="Glycyl lysine isopeptide (Gly-Lys) (interchain with K-? in acceptor proteins)" evidence="3">
    <location>
        <position position="76"/>
    </location>
</feature>
<feature type="sequence conflict" description="In Ref. 1; AAG00513." evidence="5" ref="1">
    <original>G</original>
    <variation>GGMQIFVKTLTGKTITLEVEPSDTIENVKAKIQDKEGIPPDQQRLIFAGKQLEDGRTLSDYNIQKESTLHLVLRLRGGMQIFVKTLTGKTITLEVEPSDTIENVKAKIQDKEGIPPDQQRLIFAGKQLEGGRTLSDYNIQKESTLHLVLRLRG</variation>
    <location>
        <position position="75"/>
    </location>
</feature>
<feature type="sequence conflict" description="In Ref. 1; AAG00512/AAG00513." evidence="5" ref="1">
    <original>P</original>
    <variation>S</variation>
    <location>
        <position position="265"/>
    </location>
</feature>
<feature type="strand" evidence="9">
    <location>
        <begin position="533"/>
        <end position="542"/>
    </location>
</feature>
<feature type="strand" evidence="9">
    <location>
        <begin position="544"/>
        <end position="549"/>
    </location>
</feature>
<feature type="helix" evidence="9">
    <location>
        <begin position="555"/>
        <end position="565"/>
    </location>
</feature>
<feature type="helix" evidence="9">
    <location>
        <begin position="570"/>
        <end position="572"/>
    </location>
</feature>
<feature type="strand" evidence="9">
    <location>
        <begin position="573"/>
        <end position="577"/>
    </location>
</feature>
<feature type="turn" evidence="9">
    <location>
        <begin position="588"/>
        <end position="592"/>
    </location>
</feature>
<feature type="strand" evidence="9">
    <location>
        <begin position="598"/>
        <end position="603"/>
    </location>
</feature>
<feature type="strand" evidence="7">
    <location>
        <begin position="610"/>
        <end position="615"/>
    </location>
</feature>
<feature type="strand" evidence="6">
    <location>
        <begin position="616"/>
        <end position="618"/>
    </location>
</feature>
<feature type="strand" evidence="7">
    <location>
        <begin position="620"/>
        <end position="624"/>
    </location>
</feature>
<feature type="helix" evidence="7">
    <location>
        <begin position="631"/>
        <end position="642"/>
    </location>
</feature>
<feature type="helix" evidence="7">
    <location>
        <begin position="646"/>
        <end position="648"/>
    </location>
</feature>
<feature type="strand" evidence="7">
    <location>
        <begin position="649"/>
        <end position="653"/>
    </location>
</feature>
<feature type="strand" evidence="8">
    <location>
        <begin position="660"/>
        <end position="663"/>
    </location>
</feature>
<feature type="helix" evidence="7">
    <location>
        <begin position="665"/>
        <end position="667"/>
    </location>
</feature>
<feature type="strand" evidence="7">
    <location>
        <begin position="674"/>
        <end position="679"/>
    </location>
</feature>
<dbReference type="EMBL" id="AF285161">
    <property type="protein sequence ID" value="AAG00512.1"/>
    <property type="molecule type" value="Genomic_DNA"/>
</dbReference>
<dbReference type="EMBL" id="AF285162">
    <property type="protein sequence ID" value="AAG00513.1"/>
    <property type="molecule type" value="Genomic_DNA"/>
</dbReference>
<dbReference type="EMBL" id="AC138613">
    <property type="status" value="NOT_ANNOTATED_CDS"/>
    <property type="molecule type" value="Genomic_DNA"/>
</dbReference>
<dbReference type="EMBL" id="D50527">
    <property type="protein sequence ID" value="BAA09096.1"/>
    <property type="molecule type" value="mRNA"/>
</dbReference>
<dbReference type="CCDS" id="CCDS19684.2"/>
<dbReference type="PIR" id="A49007">
    <property type="entry name" value="A49007"/>
</dbReference>
<dbReference type="PIR" id="S11296">
    <property type="entry name" value="S11296"/>
</dbReference>
<dbReference type="RefSeq" id="NP_062613.3">
    <property type="nucleotide sequence ID" value="NM_019639.4"/>
</dbReference>
<dbReference type="PDB" id="2ZNV">
    <property type="method" value="X-ray"/>
    <property type="resolution" value="1.60 A"/>
    <property type="chains" value="B/C/E/F=1-76"/>
</dbReference>
<dbReference type="PDB" id="3A1Q">
    <property type="method" value="X-ray"/>
    <property type="resolution" value="2.20 A"/>
    <property type="chains" value="A/B/D/E=1-76"/>
</dbReference>
<dbReference type="PDB" id="3A9J">
    <property type="method" value="X-ray"/>
    <property type="resolution" value="1.18 A"/>
    <property type="chains" value="A/B=1-76"/>
</dbReference>
<dbReference type="PDB" id="3A9K">
    <property type="method" value="X-ray"/>
    <property type="resolution" value="1.40 A"/>
    <property type="chains" value="A/B=1-76"/>
</dbReference>
<dbReference type="PDB" id="3VHT">
    <property type="method" value="X-ray"/>
    <property type="resolution" value="2.40 A"/>
    <property type="chains" value="C=1-76"/>
</dbReference>
<dbReference type="PDB" id="3WWQ">
    <property type="method" value="X-ray"/>
    <property type="resolution" value="1.90 A"/>
    <property type="chains" value="A/B/D/E/G/H/J/K=609-684"/>
</dbReference>
<dbReference type="PDB" id="3WXG">
    <property type="method" value="X-ray"/>
    <property type="resolution" value="3.10 A"/>
    <property type="chains" value="B/E=609-684, C/F=609-680"/>
</dbReference>
<dbReference type="PDB" id="4NQL">
    <property type="method" value="X-ray"/>
    <property type="resolution" value="2.30 A"/>
    <property type="chains" value="B/C=609-684"/>
</dbReference>
<dbReference type="PDB" id="6N5M">
    <property type="method" value="X-ray"/>
    <property type="resolution" value="3.01 A"/>
    <property type="chains" value="A=1-76"/>
</dbReference>
<dbReference type="PDBsum" id="2ZNV"/>
<dbReference type="PDBsum" id="3A1Q"/>
<dbReference type="PDBsum" id="3A9J"/>
<dbReference type="PDBsum" id="3A9K"/>
<dbReference type="PDBsum" id="3VHT"/>
<dbReference type="PDBsum" id="3WWQ"/>
<dbReference type="PDBsum" id="3WXG"/>
<dbReference type="PDBsum" id="4NQL"/>
<dbReference type="PDBsum" id="6N5M"/>
<dbReference type="BMRB" id="P0CG50"/>
<dbReference type="SMR" id="P0CG50"/>
<dbReference type="BioGRID" id="204403">
    <property type="interactions" value="468"/>
</dbReference>
<dbReference type="FunCoup" id="P0CG50">
    <property type="interactions" value="2212"/>
</dbReference>
<dbReference type="IntAct" id="P0CG50">
    <property type="interactions" value="2"/>
</dbReference>
<dbReference type="STRING" id="10090.ENSMUSP00000114180"/>
<dbReference type="GlyGen" id="P0CG50">
    <property type="glycosylation" value="1 site, 1 O-linked glycan (1 site)"/>
</dbReference>
<dbReference type="iPTMnet" id="P0CG50"/>
<dbReference type="PhosphoSitePlus" id="P0CG50"/>
<dbReference type="SwissPalm" id="P0CG50"/>
<dbReference type="REPRODUCTION-2DPAGE" id="P62991"/>
<dbReference type="jPOST" id="P0CG50"/>
<dbReference type="PaxDb" id="10090-ENSMUSP00000115578"/>
<dbReference type="Pumba" id="P0CG50"/>
<dbReference type="Antibodypedia" id="3954">
    <property type="antibodies" value="290 antibodies from 32 providers"/>
</dbReference>
<dbReference type="DNASU" id="22190"/>
<dbReference type="Ensembl" id="ENSMUST00000136312.2">
    <property type="protein sequence ID" value="ENSMUSP00000114180.2"/>
    <property type="gene ID" value="ENSMUSG00000008348.10"/>
</dbReference>
<dbReference type="Ensembl" id="ENSMUST00000156249.2">
    <property type="protein sequence ID" value="ENSMUSP00000115578.2"/>
    <property type="gene ID" value="ENSMUSG00000008348.10"/>
</dbReference>
<dbReference type="GeneID" id="22190"/>
<dbReference type="KEGG" id="mmu:22190"/>
<dbReference type="UCSC" id="uc008zri.2">
    <property type="organism name" value="mouse"/>
</dbReference>
<dbReference type="AGR" id="MGI:98889"/>
<dbReference type="CTD" id="7316"/>
<dbReference type="MGI" id="MGI:98889">
    <property type="gene designation" value="Ubc"/>
</dbReference>
<dbReference type="VEuPathDB" id="HostDB:ENSMUSG00000008348"/>
<dbReference type="eggNOG" id="KOG0001">
    <property type="taxonomic scope" value="Eukaryota"/>
</dbReference>
<dbReference type="GeneTree" id="ENSGT00940000163900"/>
<dbReference type="HOGENOM" id="CLU_010412_1_0_1"/>
<dbReference type="InParanoid" id="P0CG50"/>
<dbReference type="OMA" id="CIWYCVY"/>
<dbReference type="OrthoDB" id="19202at9989"/>
<dbReference type="PhylomeDB" id="P0CG50"/>
<dbReference type="TreeFam" id="TF354256"/>
<dbReference type="Reactome" id="R-MMU-110312">
    <property type="pathway name" value="Translesion synthesis by REV1"/>
</dbReference>
<dbReference type="Reactome" id="R-MMU-110314">
    <property type="pathway name" value="Recognition of DNA damage by PCNA-containing replication complex"/>
</dbReference>
<dbReference type="Reactome" id="R-MMU-110320">
    <property type="pathway name" value="Translesion Synthesis by POLH"/>
</dbReference>
<dbReference type="Reactome" id="R-MMU-1169091">
    <property type="pathway name" value="Activation of NF-kappaB in B cells"/>
</dbReference>
<dbReference type="Reactome" id="R-MMU-1234176">
    <property type="pathway name" value="Oxygen-dependent proline hydroxylation of Hypoxia-inducible Factor Alpha"/>
</dbReference>
<dbReference type="Reactome" id="R-MMU-1253288">
    <property type="pathway name" value="Downregulation of ERBB4 signaling"/>
</dbReference>
<dbReference type="Reactome" id="R-MMU-1295596">
    <property type="pathway name" value="Spry regulation of FGF signaling"/>
</dbReference>
<dbReference type="Reactome" id="R-MMU-1358803">
    <property type="pathway name" value="Downregulation of ERBB2:ERBB3 signaling"/>
</dbReference>
<dbReference type="Reactome" id="R-MMU-168638">
    <property type="pathway name" value="NOD1/2 Signaling Pathway"/>
</dbReference>
<dbReference type="Reactome" id="R-MMU-174048">
    <property type="pathway name" value="APC/C:Cdc20 mediated degradation of Cyclin B"/>
</dbReference>
<dbReference type="Reactome" id="R-MMU-174084">
    <property type="pathway name" value="Autodegradation of Cdh1 by Cdh1:APC/C"/>
</dbReference>
<dbReference type="Reactome" id="R-MMU-174113">
    <property type="pathway name" value="SCF-beta-TrCP mediated degradation of Emi1"/>
</dbReference>
<dbReference type="Reactome" id="R-MMU-174154">
    <property type="pathway name" value="APC/C:Cdc20 mediated degradation of Securin"/>
</dbReference>
<dbReference type="Reactome" id="R-MMU-174178">
    <property type="pathway name" value="APC/C:Cdh1 mediated degradation of Cdc20 and other APC/C:Cdh1 targeted proteins in late mitosis/early G1"/>
</dbReference>
<dbReference type="Reactome" id="R-MMU-174184">
    <property type="pathway name" value="Cdc20:Phospho-APC/C mediated degradation of Cyclin A"/>
</dbReference>
<dbReference type="Reactome" id="R-MMU-179409">
    <property type="pathway name" value="APC-Cdc20 mediated degradation of Nek2A"/>
</dbReference>
<dbReference type="Reactome" id="R-MMU-182971">
    <property type="pathway name" value="EGFR downregulation"/>
</dbReference>
<dbReference type="Reactome" id="R-MMU-187577">
    <property type="pathway name" value="SCF(Skp2)-mediated degradation of p27/p21"/>
</dbReference>
<dbReference type="Reactome" id="R-MMU-195253">
    <property type="pathway name" value="Degradation of beta-catenin by the destruction complex"/>
</dbReference>
<dbReference type="Reactome" id="R-MMU-201681">
    <property type="pathway name" value="TCF dependent signaling in response to WNT"/>
</dbReference>
<dbReference type="Reactome" id="R-MMU-202424">
    <property type="pathway name" value="Downstream TCR signaling"/>
</dbReference>
<dbReference type="Reactome" id="R-MMU-205043">
    <property type="pathway name" value="NRIF signals cell death from the nucleus"/>
</dbReference>
<dbReference type="Reactome" id="R-MMU-209543">
    <property type="pathway name" value="p75NTR recruits signalling complexes"/>
</dbReference>
<dbReference type="Reactome" id="R-MMU-209560">
    <property type="pathway name" value="NF-kB is activated and signals survival"/>
</dbReference>
<dbReference type="Reactome" id="R-MMU-2122948">
    <property type="pathway name" value="Activated NOTCH1 Transmits Signal to the Nucleus"/>
</dbReference>
<dbReference type="Reactome" id="R-MMU-2173788">
    <property type="pathway name" value="Downregulation of TGF-beta receptor signaling"/>
</dbReference>
<dbReference type="Reactome" id="R-MMU-2173791">
    <property type="pathway name" value="TGF-beta receptor signaling in EMT (epithelial to mesenchymal transition)"/>
</dbReference>
<dbReference type="Reactome" id="R-MMU-2173795">
    <property type="pathway name" value="Downregulation of SMAD2/3:SMAD4 transcriptional activity"/>
</dbReference>
<dbReference type="Reactome" id="R-MMU-2173796">
    <property type="pathway name" value="SMAD2/SMAD3:SMAD4 heterotrimer regulates transcription"/>
</dbReference>
<dbReference type="Reactome" id="R-MMU-2467813">
    <property type="pathway name" value="Separation of Sister Chromatids"/>
</dbReference>
<dbReference type="Reactome" id="R-MMU-2559580">
    <property type="pathway name" value="Oxidative Stress Induced Senescence"/>
</dbReference>
<dbReference type="Reactome" id="R-MMU-2559582">
    <property type="pathway name" value="Senescence-Associated Secretory Phenotype (SASP)"/>
</dbReference>
<dbReference type="Reactome" id="R-MMU-2559585">
    <property type="pathway name" value="Oncogene Induced Senescence"/>
</dbReference>
<dbReference type="Reactome" id="R-MMU-2565942">
    <property type="pathway name" value="Regulation of PLK1 Activity at G2/M Transition"/>
</dbReference>
<dbReference type="Reactome" id="R-MMU-2672351">
    <property type="pathway name" value="Stimuli-sensing channels"/>
</dbReference>
<dbReference type="Reactome" id="R-MMU-2871837">
    <property type="pathway name" value="FCERI mediated NF-kB activation"/>
</dbReference>
<dbReference type="Reactome" id="R-MMU-3134975">
    <property type="pathway name" value="Regulation of innate immune responses to cytosolic DNA"/>
</dbReference>
<dbReference type="Reactome" id="R-MMU-349425">
    <property type="pathway name" value="Autodegradation of the E3 ubiquitin ligase COP1"/>
</dbReference>
<dbReference type="Reactome" id="R-MMU-3769402">
    <property type="pathway name" value="Deactivation of the beta-catenin transactivating complex"/>
</dbReference>
<dbReference type="Reactome" id="R-MMU-382556">
    <property type="pathway name" value="ABC-family proteins mediated transport"/>
</dbReference>
<dbReference type="Reactome" id="R-MMU-445989">
    <property type="pathway name" value="TAK1-dependent IKK and NF-kappa-B activation"/>
</dbReference>
<dbReference type="Reactome" id="R-MMU-450302">
    <property type="pathway name" value="activated TAK1 mediates p38 MAPK activation"/>
</dbReference>
<dbReference type="Reactome" id="R-MMU-450321">
    <property type="pathway name" value="JNK (c-Jun kinases) phosphorylation and activation mediated by activated human TAK1"/>
</dbReference>
<dbReference type="Reactome" id="R-MMU-450408">
    <property type="pathway name" value="AUF1 (hnRNP D0) binds and destabilizes mRNA"/>
</dbReference>
<dbReference type="Reactome" id="R-MMU-4608870">
    <property type="pathway name" value="Asymmetric localization of PCP proteins"/>
</dbReference>
<dbReference type="Reactome" id="R-MMU-4641257">
    <property type="pathway name" value="Degradation of AXIN"/>
</dbReference>
<dbReference type="Reactome" id="R-MMU-4641258">
    <property type="pathway name" value="Degradation of DVL"/>
</dbReference>
<dbReference type="Reactome" id="R-MMU-4641263">
    <property type="pathway name" value="Regulation of FZD by ubiquitination"/>
</dbReference>
<dbReference type="Reactome" id="R-MMU-5205685">
    <property type="pathway name" value="PINK1-PRKN Mediated Mitophagy"/>
</dbReference>
<dbReference type="Reactome" id="R-MMU-532668">
    <property type="pathway name" value="N-glycan trimming in the ER and Calnexin/Calreticulin cycle"/>
</dbReference>
<dbReference type="Reactome" id="R-MMU-5357905">
    <property type="pathway name" value="Regulation of TNFR1 signaling"/>
</dbReference>
<dbReference type="Reactome" id="R-MMU-5357956">
    <property type="pathway name" value="TNFR1-induced NF-kappa-B signaling pathway"/>
</dbReference>
<dbReference type="Reactome" id="R-MMU-5358346">
    <property type="pathway name" value="Hedgehog ligand biogenesis"/>
</dbReference>
<dbReference type="Reactome" id="R-MMU-5607761">
    <property type="pathway name" value="Dectin-1 mediated noncanonical NF-kB signaling"/>
</dbReference>
<dbReference type="Reactome" id="R-MMU-5607764">
    <property type="pathway name" value="CLEC7A (Dectin-1) signaling"/>
</dbReference>
<dbReference type="Reactome" id="R-MMU-5610780">
    <property type="pathway name" value="Degradation of GLI1 by the proteasome"/>
</dbReference>
<dbReference type="Reactome" id="R-MMU-5610785">
    <property type="pathway name" value="GLI3 is processed to GLI3R by the proteasome"/>
</dbReference>
<dbReference type="Reactome" id="R-MMU-5632684">
    <property type="pathway name" value="Hedgehog 'on' state"/>
</dbReference>
<dbReference type="Reactome" id="R-MMU-5654726">
    <property type="pathway name" value="Negative regulation of FGFR1 signaling"/>
</dbReference>
<dbReference type="Reactome" id="R-MMU-5654727">
    <property type="pathway name" value="Negative regulation of FGFR2 signaling"/>
</dbReference>
<dbReference type="Reactome" id="R-MMU-5654732">
    <property type="pathway name" value="Negative regulation of FGFR3 signaling"/>
</dbReference>
<dbReference type="Reactome" id="R-MMU-5654733">
    <property type="pathway name" value="Negative regulation of FGFR4 signaling"/>
</dbReference>
<dbReference type="Reactome" id="R-MMU-5655862">
    <property type="pathway name" value="Translesion synthesis by POLK"/>
</dbReference>
<dbReference type="Reactome" id="R-MMU-5656121">
    <property type="pathway name" value="Translesion synthesis by POLI"/>
</dbReference>
<dbReference type="Reactome" id="R-MMU-5656169">
    <property type="pathway name" value="Termination of translesion DNA synthesis"/>
</dbReference>
<dbReference type="Reactome" id="R-MMU-5658442">
    <property type="pathway name" value="Regulation of RAS by GAPs"/>
</dbReference>
<dbReference type="Reactome" id="R-MMU-5668541">
    <property type="pathway name" value="TNFR2 non-canonical NF-kB pathway"/>
</dbReference>
<dbReference type="Reactome" id="R-MMU-5675221">
    <property type="pathway name" value="Negative regulation of MAPK pathway"/>
</dbReference>
<dbReference type="Reactome" id="R-MMU-5675482">
    <property type="pathway name" value="Regulation of necroptotic cell death"/>
</dbReference>
<dbReference type="Reactome" id="R-MMU-5676590">
    <property type="pathway name" value="NIK--&gt;noncanonical NF-kB signaling"/>
</dbReference>
<dbReference type="Reactome" id="R-MMU-5684264">
    <property type="pathway name" value="MAP3K8 (TPL2)-dependent MAPK1/3 activation"/>
</dbReference>
<dbReference type="Reactome" id="R-MMU-5685942">
    <property type="pathway name" value="HDR through Homologous Recombination (HRR)"/>
</dbReference>
<dbReference type="Reactome" id="R-MMU-5687128">
    <property type="pathway name" value="MAPK6/MAPK4 signaling"/>
</dbReference>
<dbReference type="Reactome" id="R-MMU-5689603">
    <property type="pathway name" value="UCH proteinases"/>
</dbReference>
<dbReference type="Reactome" id="R-MMU-5689877">
    <property type="pathway name" value="Josephin domain DUBs"/>
</dbReference>
<dbReference type="Reactome" id="R-MMU-5689880">
    <property type="pathway name" value="Ub-specific processing proteases"/>
</dbReference>
<dbReference type="Reactome" id="R-MMU-5689896">
    <property type="pathway name" value="Ovarian tumor domain proteases"/>
</dbReference>
<dbReference type="Reactome" id="R-MMU-5689901">
    <property type="pathway name" value="Metalloprotease DUBs"/>
</dbReference>
<dbReference type="Reactome" id="R-MMU-5693565">
    <property type="pathway name" value="Recruitment and ATM-mediated phosphorylation of repair and signaling proteins at DNA double strand breaks"/>
</dbReference>
<dbReference type="Reactome" id="R-MMU-5693607">
    <property type="pathway name" value="Processing of DNA double-strand break ends"/>
</dbReference>
<dbReference type="Reactome" id="R-MMU-5696394">
    <property type="pathway name" value="DNA Damage Recognition in GG-NER"/>
</dbReference>
<dbReference type="Reactome" id="R-MMU-5696395">
    <property type="pathway name" value="Formation of Incision Complex in GG-NER"/>
</dbReference>
<dbReference type="Reactome" id="R-MMU-5696397">
    <property type="pathway name" value="Gap-filling DNA repair synthesis and ligation in GG-NER"/>
</dbReference>
<dbReference type="Reactome" id="R-MMU-5696400">
    <property type="pathway name" value="Dual Incision in GG-NER"/>
</dbReference>
<dbReference type="Reactome" id="R-MMU-6781823">
    <property type="pathway name" value="Formation of TC-NER Pre-Incision Complex"/>
</dbReference>
<dbReference type="Reactome" id="R-MMU-6782135">
    <property type="pathway name" value="Dual incision in TC-NER"/>
</dbReference>
<dbReference type="Reactome" id="R-MMU-6782210">
    <property type="pathway name" value="Gap-filling DNA repair synthesis and ligation in TC-NER"/>
</dbReference>
<dbReference type="Reactome" id="R-MMU-6783310">
    <property type="pathway name" value="Fanconi Anemia Pathway"/>
</dbReference>
<dbReference type="Reactome" id="R-MMU-6804756">
    <property type="pathway name" value="Regulation of TP53 Activity through Phosphorylation"/>
</dbReference>
<dbReference type="Reactome" id="R-MMU-6804757">
    <property type="pathway name" value="Regulation of TP53 Degradation"/>
</dbReference>
<dbReference type="Reactome" id="R-MMU-6804760">
    <property type="pathway name" value="Regulation of TP53 Activity through Methylation"/>
</dbReference>
<dbReference type="Reactome" id="R-MMU-6807004">
    <property type="pathway name" value="Negative regulation of MET activity"/>
</dbReference>
<dbReference type="Reactome" id="R-MMU-68867">
    <property type="pathway name" value="Assembly of the pre-replicative complex"/>
</dbReference>
<dbReference type="Reactome" id="R-MMU-68949">
    <property type="pathway name" value="Orc1 removal from chromatin"/>
</dbReference>
<dbReference type="Reactome" id="R-MMU-69017">
    <property type="pathway name" value="CDK-mediated phosphorylation and removal of Cdc6"/>
</dbReference>
<dbReference type="Reactome" id="R-MMU-69231">
    <property type="pathway name" value="Cyclin D associated events in G1"/>
</dbReference>
<dbReference type="Reactome" id="R-MMU-69481">
    <property type="pathway name" value="G2/M Checkpoints"/>
</dbReference>
<dbReference type="Reactome" id="R-MMU-69541">
    <property type="pathway name" value="Stabilization of p53"/>
</dbReference>
<dbReference type="Reactome" id="R-MMU-69601">
    <property type="pathway name" value="Ubiquitin Mediated Degradation of Phosphorylated Cdc25A"/>
</dbReference>
<dbReference type="Reactome" id="R-MMU-75815">
    <property type="pathway name" value="Ubiquitin-dependent degradation of Cyclin D"/>
</dbReference>
<dbReference type="Reactome" id="R-MMU-8849469">
    <property type="pathway name" value="PTK6 Regulates RTKs and Their Effectors AKT1 and DOK1"/>
</dbReference>
<dbReference type="Reactome" id="R-MMU-8852276">
    <property type="pathway name" value="The role of GTSE1 in G2/M progression after G2 checkpoint"/>
</dbReference>
<dbReference type="Reactome" id="R-MMU-8854050">
    <property type="pathway name" value="FBXL7 down-regulates AURKA during mitotic entry and in early mitosis"/>
</dbReference>
<dbReference type="Reactome" id="R-MMU-8856825">
    <property type="pathway name" value="Cargo recognition for clathrin-mediated endocytosis"/>
</dbReference>
<dbReference type="Reactome" id="R-MMU-8856828">
    <property type="pathway name" value="Clathrin-mediated endocytosis"/>
</dbReference>
<dbReference type="Reactome" id="R-MMU-8863795">
    <property type="pathway name" value="Downregulation of ERBB2 signaling"/>
</dbReference>
<dbReference type="Reactome" id="R-MMU-8866427">
    <property type="pathway name" value="VLDLR internalisation and degradation"/>
</dbReference>
<dbReference type="Reactome" id="R-MMU-8866652">
    <property type="pathway name" value="Synthesis of active ubiquitin: roles of E1 and E2 enzymes"/>
</dbReference>
<dbReference type="Reactome" id="R-MMU-8866654">
    <property type="pathway name" value="E3 ubiquitin ligases ubiquitinate target proteins"/>
</dbReference>
<dbReference type="Reactome" id="R-MMU-8939236">
    <property type="pathway name" value="RUNX1 regulates transcription of genes involved in differentiation of HSCs"/>
</dbReference>
<dbReference type="Reactome" id="R-MMU-8939902">
    <property type="pathway name" value="Regulation of RUNX2 expression and activity"/>
</dbReference>
<dbReference type="Reactome" id="R-MMU-8941858">
    <property type="pathway name" value="Regulation of RUNX3 expression and activity"/>
</dbReference>
<dbReference type="Reactome" id="R-MMU-8948747">
    <property type="pathway name" value="Regulation of PTEN localization"/>
</dbReference>
<dbReference type="Reactome" id="R-MMU-8948751">
    <property type="pathway name" value="Regulation of PTEN stability and activity"/>
</dbReference>
<dbReference type="Reactome" id="R-MMU-8951664">
    <property type="pathway name" value="Neddylation"/>
</dbReference>
<dbReference type="Reactome" id="R-MMU-901032">
    <property type="pathway name" value="ER Quality Control Compartment (ERQC)"/>
</dbReference>
<dbReference type="Reactome" id="R-MMU-9010553">
    <property type="pathway name" value="Regulation of expression of SLITs and ROBOs"/>
</dbReference>
<dbReference type="Reactome" id="R-MMU-9013507">
    <property type="pathway name" value="NOTCH3 Activation and Transmission of Signal to the Nucleus"/>
</dbReference>
<dbReference type="Reactome" id="R-MMU-9020702">
    <property type="pathway name" value="Interleukin-1 signaling"/>
</dbReference>
<dbReference type="Reactome" id="R-MMU-9033241">
    <property type="pathway name" value="Peroxisomal protein import"/>
</dbReference>
<dbReference type="Reactome" id="R-MMU-909733">
    <property type="pathway name" value="Interferon alpha/beta signaling"/>
</dbReference>
<dbReference type="Reactome" id="R-MMU-912631">
    <property type="pathway name" value="Regulation of signaling by CBL"/>
</dbReference>
<dbReference type="Reactome" id="R-MMU-917729">
    <property type="pathway name" value="Endosomal Sorting Complex Required For Transport (ESCRT)"/>
</dbReference>
<dbReference type="Reactome" id="R-MMU-917937">
    <property type="pathway name" value="Iron uptake and transport"/>
</dbReference>
<dbReference type="Reactome" id="R-MMU-936440">
    <property type="pathway name" value="Negative regulators of DDX58/IFIH1 signaling"/>
</dbReference>
<dbReference type="Reactome" id="R-MMU-936964">
    <property type="pathway name" value="Activation of IRF3, IRF7 mediated by TBK1, IKKEpsilon (IKBKE)"/>
</dbReference>
<dbReference type="Reactome" id="R-MMU-937039">
    <property type="pathway name" value="IRAK1 recruits IKK complex"/>
</dbReference>
<dbReference type="Reactome" id="R-MMU-937041">
    <property type="pathway name" value="IKK complex recruitment mediated by RIP1"/>
</dbReference>
<dbReference type="Reactome" id="R-MMU-937042">
    <property type="pathway name" value="IRAK2 mediated activation of TAK1 complex"/>
</dbReference>
<dbReference type="Reactome" id="R-MMU-937072">
    <property type="pathway name" value="TRAF6-mediated induction of TAK1 complex within TLR4 complex"/>
</dbReference>
<dbReference type="Reactome" id="R-MMU-9645460">
    <property type="pathway name" value="Alpha-protein kinase 1 signaling pathway"/>
</dbReference>
<dbReference type="Reactome" id="R-MMU-9646399">
    <property type="pathway name" value="Aggrephagy"/>
</dbReference>
<dbReference type="Reactome" id="R-MMU-9648002">
    <property type="pathway name" value="RAS processing"/>
</dbReference>
<dbReference type="Reactome" id="R-MMU-9664873">
    <property type="pathway name" value="Pexophagy"/>
</dbReference>
<dbReference type="Reactome" id="R-MMU-9705462">
    <property type="pathway name" value="Inactivation of CSF3 (G-CSF) signaling"/>
</dbReference>
<dbReference type="Reactome" id="R-MMU-9706369">
    <property type="pathway name" value="Negative regulation of FLT3"/>
</dbReference>
<dbReference type="Reactome" id="R-MMU-9708530">
    <property type="pathway name" value="Regulation of BACH1 activity"/>
</dbReference>
<dbReference type="Reactome" id="R-MMU-975144">
    <property type="pathway name" value="IRAK1 recruits IKK complex upon TLR7/8 or 9 stimulation"/>
</dbReference>
<dbReference type="Reactome" id="R-MMU-975163">
    <property type="pathway name" value="IRAK2 mediated activation of TAK1 complex upon TLR7/8 or 9 stimulation"/>
</dbReference>
<dbReference type="Reactome" id="R-MMU-9755511">
    <property type="pathway name" value="KEAP1-NFE2L2 pathway"/>
</dbReference>
<dbReference type="Reactome" id="R-MMU-9758274">
    <property type="pathway name" value="Regulation of NF-kappa B signaling"/>
</dbReference>
<dbReference type="Reactome" id="R-MMU-9762114">
    <property type="pathway name" value="GSK3B and BTRC:CUL1-mediated-degradation of NFE2L2"/>
</dbReference>
<dbReference type="Reactome" id="R-MMU-9824878">
    <property type="pathway name" value="Regulation of TBK1, IKKEpsilon (IKBKE)-mediated activation of IRF3, IRF7"/>
</dbReference>
<dbReference type="Reactome" id="R-MMU-983168">
    <property type="pathway name" value="Antigen processing: Ubiquitination &amp; Proteasome degradation"/>
</dbReference>
<dbReference type="Reactome" id="R-MMU-9861718">
    <property type="pathway name" value="Regulation of pyruvate metabolism"/>
</dbReference>
<dbReference type="BioGRID-ORCS" id="22190">
    <property type="hits" value="8 hits in 78 CRISPR screens"/>
</dbReference>
<dbReference type="CD-CODE" id="CE726F99">
    <property type="entry name" value="Postsynaptic density"/>
</dbReference>
<dbReference type="ChiTaRS" id="Ubc">
    <property type="organism name" value="mouse"/>
</dbReference>
<dbReference type="EvolutionaryTrace" id="P0CG50"/>
<dbReference type="PRO" id="PR:P0CG50"/>
<dbReference type="Proteomes" id="UP000000589">
    <property type="component" value="Chromosome 5"/>
</dbReference>
<dbReference type="RNAct" id="P0CG50">
    <property type="molecule type" value="protein"/>
</dbReference>
<dbReference type="Bgee" id="ENSMUSG00000008348">
    <property type="expression patterns" value="Expressed in granulocyte and 266 other cell types or tissues"/>
</dbReference>
<dbReference type="ExpressionAtlas" id="P0CG50">
    <property type="expression patterns" value="baseline and differential"/>
</dbReference>
<dbReference type="GO" id="GO:0005829">
    <property type="term" value="C:cytosol"/>
    <property type="evidence" value="ECO:0000304"/>
    <property type="project" value="Reactome"/>
</dbReference>
<dbReference type="GO" id="GO:0005741">
    <property type="term" value="C:mitochondrial outer membrane"/>
    <property type="evidence" value="ECO:0007669"/>
    <property type="project" value="UniProtKB-SubCell"/>
</dbReference>
<dbReference type="GO" id="GO:0043209">
    <property type="term" value="C:myelin sheath"/>
    <property type="evidence" value="ECO:0007005"/>
    <property type="project" value="UniProtKB"/>
</dbReference>
<dbReference type="GO" id="GO:0005654">
    <property type="term" value="C:nucleoplasm"/>
    <property type="evidence" value="ECO:0000304"/>
    <property type="project" value="Reactome"/>
</dbReference>
<dbReference type="CDD" id="cd01803">
    <property type="entry name" value="Ubl_ubiquitin"/>
    <property type="match status" value="9"/>
</dbReference>
<dbReference type="FunFam" id="3.10.20.90:FF:000158">
    <property type="entry name" value="Polyubiquitin 5"/>
    <property type="match status" value="9"/>
</dbReference>
<dbReference type="FunFam" id="3.10.20.90:FF:000469">
    <property type="entry name" value="Polyubiquitin-C"/>
    <property type="match status" value="1"/>
</dbReference>
<dbReference type="Gene3D" id="3.10.20.90">
    <property type="entry name" value="Phosphatidylinositol 3-kinase Catalytic Subunit, Chain A, domain 1"/>
    <property type="match status" value="10"/>
</dbReference>
<dbReference type="InterPro" id="IPR000626">
    <property type="entry name" value="Ubiquitin-like_dom"/>
</dbReference>
<dbReference type="InterPro" id="IPR029071">
    <property type="entry name" value="Ubiquitin-like_domsf"/>
</dbReference>
<dbReference type="InterPro" id="IPR019954">
    <property type="entry name" value="Ubiquitin_CS"/>
</dbReference>
<dbReference type="InterPro" id="IPR019956">
    <property type="entry name" value="Ubiquitin_dom"/>
</dbReference>
<dbReference type="InterPro" id="IPR050158">
    <property type="entry name" value="Ubiquitin_ubiquitin-like"/>
</dbReference>
<dbReference type="PANTHER" id="PTHR10666">
    <property type="entry name" value="UBIQUITIN"/>
    <property type="match status" value="1"/>
</dbReference>
<dbReference type="Pfam" id="PF00240">
    <property type="entry name" value="ubiquitin"/>
    <property type="match status" value="9"/>
</dbReference>
<dbReference type="PRINTS" id="PR00348">
    <property type="entry name" value="UBIQUITIN"/>
</dbReference>
<dbReference type="SMART" id="SM00213">
    <property type="entry name" value="UBQ"/>
    <property type="match status" value="9"/>
</dbReference>
<dbReference type="SUPFAM" id="SSF54236">
    <property type="entry name" value="Ubiquitin-like"/>
    <property type="match status" value="10"/>
</dbReference>
<dbReference type="PROSITE" id="PS00299">
    <property type="entry name" value="UBIQUITIN_1"/>
    <property type="match status" value="9"/>
</dbReference>
<dbReference type="PROSITE" id="PS50053">
    <property type="entry name" value="UBIQUITIN_2"/>
    <property type="match status" value="9"/>
</dbReference>
<sequence length="734" mass="82550">MQIFVKTLTGKTITLEVEPSDTIENVKAKIQDKEGIPPDQQRLIFAGKQLEDGRTLSDYNIQKESTLHLVLRLRGGMQIFVKTLTGKTITLEVEPSDTIENVKAKIQDKEGIPPDQQRLIFAGKQLEDGRTLSDYNIQKESTLHLVLRLRGGMQIFVKTLTGKTITLEVEPSDTIENVKAKIQDKEGIPPDQQRLIFAGKQLEDGRTLSDYNIQKESTLHLVLRLRGGMQIFVKTLTGKTITLEVEPSDTIENVKAKIQDKEGIPPDQQRLIFAGKQLEDGRTLSDYNIQKESTLHLVLRLRGGMQIFVKTLTGKTITLEVEPSDTIENVKAKIQDKEGIPPDQQRLIFAGKQLEDGRTLSDYNIQKESTLHLVLRLRGGMQIFVKTLTGKTITLEVEPSDTIENVKAKIQDKEGIPPDQQRLIFAGKQLEDGRTLSDYNIQKESTLHLVLRLRGGMQIFVKTLTGKTITLEVEPSDTIENVKAKIQDKEGIPPDQQRLIFAGKQLEDGRTLSDYNIQKESTLHLVLRLRGGMQIFVKTLTGKTITLEVEPSDTIENVKAKIQDKEGIPPDQQRLIFAGKQLEDGRTLSDYNIQKESTLHLVLRLRGGMQIFVKTLTGKTITLEVEPSDTIENVKAKIQDKEGIPPDQQRLIFAGKQLEDGRTLSDYNIQKESTLHLVLRLRGGMQIFVKTLTGKTITLDVEPSVTTKKVKQEDRRTFLTTVSKKSPPCACSWV</sequence>
<protein>
    <recommendedName>
        <fullName>Polyubiquitin-C</fullName>
    </recommendedName>
    <component>
        <recommendedName>
            <fullName>Ubiquitin</fullName>
        </recommendedName>
    </component>
    <component>
        <recommendedName>
            <fullName>Ubiquitin-related 1</fullName>
        </recommendedName>
    </component>
    <component>
        <recommendedName>
            <fullName>Ubiquitin-related 2</fullName>
        </recommendedName>
    </component>
</protein>
<accession>P0CG50</accession>
<accession>E9QKI0</accession>
<accession>P02248</accession>
<accession>P02249</accession>
<accession>P02250</accession>
<accession>P62991</accession>
<accession>Q29120</accession>
<accession>Q62317</accession>
<accession>Q64223</accession>
<accession>Q8VCH1</accession>
<accession>Q91887</accession>
<accession>Q91888</accession>
<accession>Q9CXY4</accession>
<accession>Q9CZM0</accession>
<accession>Q9D1R5</accession>
<accession>Q9D8D9</accession>
<accession>Q9ET23</accession>
<accession>Q9ET24</accession>
<accession>Q9Z0H9</accession>
<proteinExistence type="evidence at protein level"/>
<comment type="function">
    <molecule>Ubiquitin</molecule>
    <text evidence="2 4">Exists either covalently attached to another protein, or free (unanchored). When covalently bound, it is conjugated to target proteins via an isopeptide bond either as a monomer (monoubiquitin), a polymer linked via different Lys residues of the ubiquitin (polyubiquitin chains) or a linear polymer linked via the initiator Met of the ubiquitin (linear polyubiquitin chains). Polyubiquitin chains, when attached to a target protein, have different functions depending on the Lys residue of the ubiquitin that is linked: Lys-6-linked may be involved in DNA repair; Lys-11-linked is involved in ERAD (endoplasmic reticulum-associated degradation) and in cell-cycle regulation; Lys-29-linked is involved in proteotoxic stress response and cell cycle; Lys-33-linked is involved in kinase modification; Lys-48-linked is involved in protein degradation via the proteasome; Lys-63-linked is involved in endocytosis, DNA-damage responses as well as in signaling processes leading to activation of the transcription factor NF-kappa-B. Linear polymer chains formed via attachment by the initiator Met lead to cell signaling. Ubiquitin is usually conjugated to Lys residues of target proteins, however, in rare cases, conjugation to Cys or Ser residues has been observed. When polyubiquitin is free (unanchored-polyubiquitin), it also has distinct roles, such as in activation of protein kinases, and in signaling. During ubiquitination, the acceptor ubiquitin is positioned in the active site via direct interaction with the E2 ubiquitin-conjugating enzymes such as UBE2R2 (By similarity). As a monoubiquitin, its C-terminal glycine is recognized as a C-degron by Cul2-RING (CRL2) E3 ubiquitin-protein ligase complexes (By similarity).</text>
</comment>
<comment type="subcellular location">
    <molecule>Ubiquitin</molecule>
    <subcellularLocation>
        <location evidence="1">Cytoplasm</location>
    </subcellularLocation>
    <subcellularLocation>
        <location evidence="1">Nucleus</location>
    </subcellularLocation>
    <subcellularLocation>
        <location evidence="2">Mitochondrion outer membrane</location>
        <topology evidence="2">Peripheral membrane protein</topology>
    </subcellularLocation>
</comment>
<comment type="PTM">
    <molecule>Ubiquitin</molecule>
    <text evidence="2">Phosphorylated at Ser-65 by PINK1 during mitophagy. Phosphorylated ubiquitin specifically binds and activates parkin (PRKN), triggering mitophagy. Phosphorylation does not affect E1-mediated E2 charging of ubiquitin but affects discharging of E2 enzymes to form polyubiquitin chains. It also affects deubiquitination by deubiquitinase enzymes such as USP30.</text>
</comment>
<comment type="PTM">
    <molecule>Ubiquitin</molecule>
    <text evidence="2">Mono-ADP-ribosylated at the C-terminus by PARP9, a component of the PPAR9-DTX3L complex. ADP-ribosylation requires processing by E1 and E2 enzymes and prevents ubiquitin conjugation to substrates such as histones.</text>
</comment>
<comment type="miscellaneous">
    <text>Ubiquitin is encoded by 4 different genes. Uba52 and Rps27a genes code for a single copy of ubiquitin fused to the ribosomal proteins eL40 and eS31, respectively. UBB and UBC genes code for a polyubiquitin precursor with exact head to tail repeats, the number of repeats differ between species and strains.</text>
</comment>
<comment type="miscellaneous">
    <text>For the sake of clarity sequence features are annotated only for the first chain, and are not repeated for each of the following chains.</text>
</comment>
<comment type="similarity">
    <text evidence="5">Belongs to the ubiquitin family.</text>
</comment>
<evidence type="ECO:0000250" key="1"/>
<evidence type="ECO:0000250" key="2">
    <source>
        <dbReference type="UniProtKB" id="P0CG48"/>
    </source>
</evidence>
<evidence type="ECO:0000255" key="3">
    <source>
        <dbReference type="PROSITE-ProRule" id="PRU00214"/>
    </source>
</evidence>
<evidence type="ECO:0000303" key="4">
    <source>
    </source>
</evidence>
<evidence type="ECO:0000305" key="5"/>
<evidence type="ECO:0007829" key="6">
    <source>
        <dbReference type="PDB" id="2ZNV"/>
    </source>
</evidence>
<evidence type="ECO:0007829" key="7">
    <source>
        <dbReference type="PDB" id="3A9J"/>
    </source>
</evidence>
<evidence type="ECO:0007829" key="8">
    <source>
        <dbReference type="PDB" id="3WXG"/>
    </source>
</evidence>
<evidence type="ECO:0007829" key="9">
    <source>
        <dbReference type="PDB" id="6N5M"/>
    </source>
</evidence>